<proteinExistence type="predicted"/>
<dbReference type="EMBL" id="PP505398">
    <property type="protein sequence ID" value="WYC13322.1"/>
    <property type="molecule type" value="Genomic_DNA"/>
</dbReference>
<dbReference type="Gene3D" id="3.90.1200.10">
    <property type="match status" value="1"/>
</dbReference>
<dbReference type="InterPro" id="IPR051678">
    <property type="entry name" value="AGP_Transferase"/>
</dbReference>
<dbReference type="InterPro" id="IPR002575">
    <property type="entry name" value="Aminoglycoside_PTrfase"/>
</dbReference>
<dbReference type="InterPro" id="IPR011009">
    <property type="entry name" value="Kinase-like_dom_sf"/>
</dbReference>
<dbReference type="PANTHER" id="PTHR21310:SF15">
    <property type="entry name" value="AMINOGLYCOSIDE PHOSPHOTRANSFERASE DOMAIN-CONTAINING PROTEIN"/>
    <property type="match status" value="1"/>
</dbReference>
<dbReference type="PANTHER" id="PTHR21310">
    <property type="entry name" value="AMINOGLYCOSIDE PHOSPHOTRANSFERASE-RELATED-RELATED"/>
    <property type="match status" value="1"/>
</dbReference>
<dbReference type="Pfam" id="PF01636">
    <property type="entry name" value="APH"/>
    <property type="match status" value="1"/>
</dbReference>
<dbReference type="SUPFAM" id="SSF56112">
    <property type="entry name" value="Protein kinase-like (PK-like)"/>
    <property type="match status" value="1"/>
</dbReference>
<gene>
    <name evidence="2" type="primary">claY</name>
</gene>
<sequence length="404" mass="45698">MLIPCWDSAGQIHHLEGFPTSFKDWSRGEELSAQRREFLSAVEKVTPSSISSTRDLAVDMNLTLEVTLDDGQVLVVRQCYPSQNDDVEELWRTSKFESEVNLMQWLEQNSRIPVPSIHSVMRRGTDSPAHFIIMSKLPGQVLMNSHSLLSSLAKVFALSHLTVRNTVLELFRLDVPQRIGTTIPSNPGDGLDVRPKIGKQYSLSADRVFDTLEEYMRHLFSLKRKSKSIGDGDTDKARAYSTLTTLEDLVNVHLKSLTSPSLRRCVLMHDDLHDANILVDIHGNITGVLDWEFHSIQPAVLAVGYPAWLSYDDTNDPRFASSSVWWVVGRQESIELRRQYAMIVKVKDLEYYEALVAGLFLRSVVNWLIDEHADPGCLRLRGWMISEEALGESLTQPDQIVPAK</sequence>
<protein>
    <recommendedName>
        <fullName evidence="2">Clavilactone A biosynthesis cluster protein Y</fullName>
    </recommendedName>
</protein>
<feature type="chain" id="PRO_0000461442" description="Clavilactone A biosynthesis cluster protein Y">
    <location>
        <begin position="1"/>
        <end position="404"/>
    </location>
</feature>
<comment type="function">
    <text evidence="1">Part of the gene cluster that mediates the biosynthesis of clavilactone A, a meroterpenoid that features a unique benzo-fused ten-membered carbocyclic ring unit with an alpha,beta-epoxy-gamma-lactone moiety, forming an intriguing 10/5/3 tricyclic nested skeleton (PubMed:38602511). ClaR, ClaS and ClaT are sufficient to produce clavilactone A and the function of claY, if any, has still to be identified (PubMed:38602511). The biosynthesis begins with the prenyltransferase claS that transfers geranyl pyrophosphate (GPP) to hydroquinone to produces geranylhydroquinon. The cytochrome P450 monooxygenase claR then catalyzes the diradical coupling reaction between the intramolecular hydroquinone and allyl moieties to form the benzo-fused ten-membered carbocyclic ring unit of wigantol. Finally the cytochrome P450 monooxygenase claT exquisitely and stereoselectively assembles the alpha,beta-epoxy-gamma-lactone moiety, producing clavilactone A via arnebinol A (PubMed:38602511).</text>
</comment>
<evidence type="ECO:0000269" key="1">
    <source>
    </source>
</evidence>
<evidence type="ECO:0000303" key="2">
    <source>
    </source>
</evidence>
<accession>P9WEI0</accession>
<reference key="1">
    <citation type="journal article" date="2024" name="J. Am. Chem. Soc.">
        <title>Two cytochrome P450 enzymes form the tricyclic nested skeleton of meroterpenoids by sequential oxidative reactions.</title>
        <authorList>
            <person name="Yang E."/>
            <person name="Yao Y."/>
            <person name="Su H."/>
            <person name="Sun Z."/>
            <person name="Gao S.S."/>
            <person name="Sureram S."/>
            <person name="Kittakoop P."/>
            <person name="Fan K."/>
            <person name="Pan Y."/>
            <person name="Xu X."/>
            <person name="Sun Z.H."/>
            <person name="Ma G."/>
            <person name="Liu G."/>
        </authorList>
    </citation>
    <scope>NUCLEOTIDE SEQUENCE [GENOMIC DNA]</scope>
    <scope>FUNCTION</scope>
</reference>
<name>CLAY_AMPCV</name>
<organism>
    <name type="scientific">Ampulloclitocybe clavipes</name>
    <name type="common">Club foot</name>
    <name type="synonym">Clitocybe clavipes</name>
    <dbReference type="NCBI Taxonomy" id="56467"/>
    <lineage>
        <taxon>Eukaryota</taxon>
        <taxon>Fungi</taxon>
        <taxon>Dikarya</taxon>
        <taxon>Basidiomycota</taxon>
        <taxon>Agaricomycotina</taxon>
        <taxon>Agaricomycetes</taxon>
        <taxon>Agaricomycetidae</taxon>
        <taxon>Agaricales</taxon>
        <taxon>Hygrophoraceae</taxon>
        <taxon>Ampulloclitocybe</taxon>
    </lineage>
</organism>